<gene>
    <name type="primary">galE</name>
</gene>
<accession>Q05026</accession>
<reference key="1">
    <citation type="journal article" date="1993" name="Mol. Microbiol.">
        <title>The role of galE in the biosynthesis and function of gonococcal lipopolysaccharide.</title>
        <authorList>
            <person name="Robertson B.D."/>
            <person name="Frosch M."/>
            <person name="van Putten J.P.M."/>
        </authorList>
    </citation>
    <scope>NUCLEOTIDE SEQUENCE [GENOMIC DNA]</scope>
    <scope>FUNCTION</scope>
    <source>
        <strain>MS11</strain>
    </source>
</reference>
<comment type="function">
    <text evidence="2">Involved in the metabolism of galactose. Plays an essential role in the incorporation of galactose into meningococcal lipopolysaccharide surface molecules, which are important for pathogenesis. Catalyzes the conversion of UDP-galactose (UDP-Gal) to UDP-glucose (UDP-Glc) through a mechanism involving the transient reduction of NAD.</text>
</comment>
<comment type="catalytic activity">
    <reaction>
        <text>UDP-alpha-D-glucose = UDP-alpha-D-galactose</text>
        <dbReference type="Rhea" id="RHEA:22168"/>
        <dbReference type="ChEBI" id="CHEBI:58885"/>
        <dbReference type="ChEBI" id="CHEBI:66914"/>
        <dbReference type="EC" id="5.1.3.2"/>
    </reaction>
</comment>
<comment type="cofactor">
    <cofactor evidence="1">
        <name>NAD(+)</name>
        <dbReference type="ChEBI" id="CHEBI:57540"/>
    </cofactor>
</comment>
<comment type="pathway">
    <text>Carbohydrate metabolism; galactose metabolism.</text>
</comment>
<comment type="subunit">
    <text evidence="1">Homodimer.</text>
</comment>
<comment type="similarity">
    <text evidence="3">Belongs to the NAD(P)-dependent epimerase/dehydratase family.</text>
</comment>
<protein>
    <recommendedName>
        <fullName>UDP-glucose 4-epimerase</fullName>
        <ecNumber>5.1.3.2</ecNumber>
    </recommendedName>
    <alternativeName>
        <fullName>Galactowaldenase</fullName>
    </alternativeName>
    <alternativeName>
        <fullName>UDP-galactose 4-epimerase</fullName>
    </alternativeName>
</protein>
<proteinExistence type="inferred from homology"/>
<feature type="chain" id="PRO_0000183211" description="UDP-glucose 4-epimerase">
    <location>
        <begin position="1"/>
        <end position="338"/>
    </location>
</feature>
<feature type="active site" description="Proton acceptor" evidence="1">
    <location>
        <position position="149"/>
    </location>
</feature>
<feature type="binding site" evidence="1">
    <location>
        <begin position="11"/>
        <end position="12"/>
    </location>
    <ligand>
        <name>NAD(+)</name>
        <dbReference type="ChEBI" id="CHEBI:57540"/>
    </ligand>
</feature>
<feature type="binding site" evidence="1">
    <location>
        <begin position="31"/>
        <end position="36"/>
    </location>
    <ligand>
        <name>NAD(+)</name>
        <dbReference type="ChEBI" id="CHEBI:57540"/>
    </ligand>
</feature>
<feature type="binding site" evidence="1">
    <location>
        <begin position="58"/>
        <end position="59"/>
    </location>
    <ligand>
        <name>NAD(+)</name>
        <dbReference type="ChEBI" id="CHEBI:57540"/>
    </ligand>
</feature>
<feature type="binding site" evidence="1">
    <location>
        <begin position="80"/>
        <end position="84"/>
    </location>
    <ligand>
        <name>NAD(+)</name>
        <dbReference type="ChEBI" id="CHEBI:57540"/>
    </ligand>
</feature>
<feature type="binding site" evidence="1">
    <location>
        <position position="99"/>
    </location>
    <ligand>
        <name>NAD(+)</name>
        <dbReference type="ChEBI" id="CHEBI:57540"/>
    </ligand>
</feature>
<feature type="binding site" evidence="1">
    <location>
        <position position="124"/>
    </location>
    <ligand>
        <name>NAD(+)</name>
        <dbReference type="ChEBI" id="CHEBI:57540"/>
    </ligand>
</feature>
<feature type="binding site" evidence="1">
    <location>
        <position position="124"/>
    </location>
    <ligand>
        <name>substrate</name>
    </ligand>
</feature>
<feature type="binding site" evidence="1">
    <location>
        <position position="149"/>
    </location>
    <ligand>
        <name>NAD(+)</name>
        <dbReference type="ChEBI" id="CHEBI:57540"/>
    </ligand>
</feature>
<feature type="binding site" evidence="1">
    <location>
        <position position="149"/>
    </location>
    <ligand>
        <name>substrate</name>
    </ligand>
</feature>
<feature type="binding site" evidence="1">
    <location>
        <position position="153"/>
    </location>
    <ligand>
        <name>NAD(+)</name>
        <dbReference type="ChEBI" id="CHEBI:57540"/>
    </ligand>
</feature>
<feature type="binding site" evidence="1">
    <location>
        <position position="178"/>
    </location>
    <ligand>
        <name>NAD(+)</name>
        <dbReference type="ChEBI" id="CHEBI:57540"/>
    </ligand>
</feature>
<feature type="binding site" evidence="1">
    <location>
        <position position="179"/>
    </location>
    <ligand>
        <name>substrate</name>
    </ligand>
</feature>
<feature type="binding site" evidence="1">
    <location>
        <begin position="199"/>
        <end position="200"/>
    </location>
    <ligand>
        <name>substrate</name>
    </ligand>
</feature>
<feature type="binding site" evidence="1">
    <location>
        <begin position="216"/>
        <end position="218"/>
    </location>
    <ligand>
        <name>substrate</name>
    </ligand>
</feature>
<feature type="binding site" evidence="1">
    <location>
        <position position="231"/>
    </location>
    <ligand>
        <name>substrate</name>
    </ligand>
</feature>
<feature type="binding site" evidence="1">
    <location>
        <begin position="292"/>
        <end position="295"/>
    </location>
    <ligand>
        <name>substrate</name>
    </ligand>
</feature>
<evidence type="ECO:0000250" key="1"/>
<evidence type="ECO:0000269" key="2">
    <source>
    </source>
</evidence>
<evidence type="ECO:0000305" key="3"/>
<sequence>MTVLITGGTGFIGSHTAVSLVQSGYDAVILDNLCNSSAAVLPRLRQITGRNIPFYQGDIRDCQILRQIFSEHEIESVIHFAGLKAVGESVAEPTKYYGNNVYGSLVLAEEMARAGVLKIVFSSSATVYGDAEKVPYTEDMRPGDTANPYGASKAMVERMLTDIQKADPRWSVILLRYFNPIGAHESGLIGEQPNGVPNNLLPYICQVASGRLPQLSVFGGDYPTPDGTGMRDYIHVMDLAEGHIAAMKAKGGVAGVHLFNLGSGRAYSVLEIIRAFEAASGLHIPYRIQPRRAGDLACSYADPSHTKQQTGWETKRGLQQMMEDSWRWVSRNPGRYGD</sequence>
<dbReference type="EC" id="5.1.3.2"/>
<dbReference type="EMBL" id="Z21508">
    <property type="protein sequence ID" value="CAA79721.1"/>
    <property type="molecule type" value="Genomic_DNA"/>
</dbReference>
<dbReference type="PIR" id="S34984">
    <property type="entry name" value="S34984"/>
</dbReference>
<dbReference type="RefSeq" id="WP_003694383.1">
    <property type="nucleotide sequence ID" value="NZ_WHPL01000002.1"/>
</dbReference>
<dbReference type="SMR" id="Q05026"/>
<dbReference type="UniPathway" id="UPA00214"/>
<dbReference type="GO" id="GO:0005829">
    <property type="term" value="C:cytosol"/>
    <property type="evidence" value="ECO:0007669"/>
    <property type="project" value="TreeGrafter"/>
</dbReference>
<dbReference type="GO" id="GO:0003978">
    <property type="term" value="F:UDP-glucose 4-epimerase activity"/>
    <property type="evidence" value="ECO:0007669"/>
    <property type="project" value="UniProtKB-EC"/>
</dbReference>
<dbReference type="GO" id="GO:0006012">
    <property type="term" value="P:galactose metabolic process"/>
    <property type="evidence" value="ECO:0007669"/>
    <property type="project" value="UniProtKB-UniPathway"/>
</dbReference>
<dbReference type="CDD" id="cd05247">
    <property type="entry name" value="UDP_G4E_1_SDR_e"/>
    <property type="match status" value="1"/>
</dbReference>
<dbReference type="Gene3D" id="3.40.50.720">
    <property type="entry name" value="NAD(P)-binding Rossmann-like Domain"/>
    <property type="match status" value="1"/>
</dbReference>
<dbReference type="Gene3D" id="3.90.25.10">
    <property type="entry name" value="UDP-galactose 4-epimerase, domain 1"/>
    <property type="match status" value="1"/>
</dbReference>
<dbReference type="InterPro" id="IPR001509">
    <property type="entry name" value="Epimerase_deHydtase"/>
</dbReference>
<dbReference type="InterPro" id="IPR036291">
    <property type="entry name" value="NAD(P)-bd_dom_sf"/>
</dbReference>
<dbReference type="InterPro" id="IPR005886">
    <property type="entry name" value="UDP_G4E"/>
</dbReference>
<dbReference type="NCBIfam" id="TIGR01179">
    <property type="entry name" value="galE"/>
    <property type="match status" value="1"/>
</dbReference>
<dbReference type="NCBIfam" id="NF007956">
    <property type="entry name" value="PRK10675.1"/>
    <property type="match status" value="1"/>
</dbReference>
<dbReference type="PANTHER" id="PTHR43725">
    <property type="entry name" value="UDP-GLUCOSE 4-EPIMERASE"/>
    <property type="match status" value="1"/>
</dbReference>
<dbReference type="PANTHER" id="PTHR43725:SF47">
    <property type="entry name" value="UDP-GLUCOSE 4-EPIMERASE"/>
    <property type="match status" value="1"/>
</dbReference>
<dbReference type="Pfam" id="PF01370">
    <property type="entry name" value="Epimerase"/>
    <property type="match status" value="1"/>
</dbReference>
<dbReference type="PRINTS" id="PR01713">
    <property type="entry name" value="NUCEPIMERASE"/>
</dbReference>
<dbReference type="SUPFAM" id="SSF51735">
    <property type="entry name" value="NAD(P)-binding Rossmann-fold domains"/>
    <property type="match status" value="1"/>
</dbReference>
<organism>
    <name type="scientific">Neisseria gonorrhoeae</name>
    <dbReference type="NCBI Taxonomy" id="485"/>
    <lineage>
        <taxon>Bacteria</taxon>
        <taxon>Pseudomonadati</taxon>
        <taxon>Pseudomonadota</taxon>
        <taxon>Betaproteobacteria</taxon>
        <taxon>Neisseriales</taxon>
        <taxon>Neisseriaceae</taxon>
        <taxon>Neisseria</taxon>
    </lineage>
</organism>
<name>GALE_NEIGO</name>
<keyword id="KW-0119">Carbohydrate metabolism</keyword>
<keyword id="KW-0299">Galactose metabolism</keyword>
<keyword id="KW-0413">Isomerase</keyword>
<keyword id="KW-0520">NAD</keyword>